<organism>
    <name type="scientific">Pyricularia grisea</name>
    <name type="common">Crabgrass-specific blast fungus</name>
    <name type="synonym">Magnaporthe grisea</name>
    <dbReference type="NCBI Taxonomy" id="148305"/>
    <lineage>
        <taxon>Eukaryota</taxon>
        <taxon>Fungi</taxon>
        <taxon>Dikarya</taxon>
        <taxon>Ascomycota</taxon>
        <taxon>Pezizomycotina</taxon>
        <taxon>Sordariomycetes</taxon>
        <taxon>Sordariomycetidae</taxon>
        <taxon>Magnaporthales</taxon>
        <taxon>Pyriculariaceae</taxon>
        <taxon>Pyricularia</taxon>
    </lineage>
</organism>
<sequence length="331" mass="35570">MKASSVLLGLAPLAALAAPTPEAELSARQAQQSIDALMKAKGKLYFGTATDQGLLNTGKNSAIIKADFGQVTPENSMKCQSLENTRGQYNWAPADALVNFAVSNNKSIRGHTLIWHSQLPGWVNNINDRNQLTTVIQNHVATVMGRWKGKIRAWDVVNEIFNEDGTMRQSVFSRVLGEDFVRIAFEAARKADPNAKLYINDYNLDRPNAGKLTKGMVGHVKKWVGAGVPIDGIGRQGHLQSGQGNGLGQGIKGLGDSGVKEVGGNELDIQGNNGNEFGGGNKACLPVPACVGIPAWGVRDNDSWRPQGNPLLFDSNYNPKPAYNSVVQALK</sequence>
<reference key="1">
    <citation type="journal article" date="1995" name="Mol. Plant Microbe Interact.">
        <title>Purification, cloning and characterization of two xylanases from Magnaporthe grisea, the rice blast fungus.</title>
        <authorList>
            <person name="Wu S.C."/>
            <person name="Kaufman S."/>
            <person name="Darvill A.G."/>
            <person name="Albersheim P."/>
        </authorList>
    </citation>
    <scope>NUCLEOTIDE SEQUENCE [GENOMIC DNA]</scope>
    <scope>SUBCELLULAR LOCATION</scope>
    <scope>CATALYTIC ACTIVITY</scope>
    <scope>INDUCTION</scope>
    <source>
        <strain>Ken60-19</strain>
    </source>
</reference>
<reference key="2">
    <citation type="journal article" date="1997" name="Mol. Plant Microbe Interact.">
        <title>Deletion of two endo-beta-1,4-xylanase genes reveals additional isozymes secreted by the rice blast fungus.</title>
        <authorList>
            <person name="Wu S.C."/>
            <person name="Ham K.S."/>
            <person name="Darvill A.G."/>
            <person name="Albersheim P."/>
        </authorList>
    </citation>
    <scope>FUNCTION</scope>
    <scope>DISRUPTION PHENOTYPE</scope>
    <source>
        <strain>CP987</strain>
    </source>
</reference>
<feature type="signal peptide" evidence="2">
    <location>
        <begin position="1"/>
        <end position="17"/>
    </location>
</feature>
<feature type="chain" id="PRO_5000142624" description="Endo-1,4-beta-xylanase 2">
    <location>
        <begin position="18"/>
        <end position="331"/>
    </location>
</feature>
<feature type="domain" description="GH10" evidence="3">
    <location>
        <begin position="31"/>
        <end position="329"/>
    </location>
</feature>
<feature type="active site" description="Proton donor" evidence="1">
    <location>
        <position position="159"/>
    </location>
</feature>
<feature type="active site" description="Nucleophile" evidence="1">
    <location>
        <position position="266"/>
    </location>
</feature>
<feature type="glycosylation site" description="N-linked (GlcNAc...) asparagine" evidence="2">
    <location>
        <position position="105"/>
    </location>
</feature>
<feature type="glycosylation site" description="N-linked (GlcNAc...) asparagine" evidence="2">
    <location>
        <position position="301"/>
    </location>
</feature>
<feature type="disulfide bond" evidence="1">
    <location>
        <begin position="284"/>
        <end position="290"/>
    </location>
</feature>
<name>XYN2_PYRGI</name>
<accession>Q01176</accession>
<evidence type="ECO:0000250" key="1"/>
<evidence type="ECO:0000255" key="2"/>
<evidence type="ECO:0000255" key="3">
    <source>
        <dbReference type="PROSITE-ProRule" id="PRU01096"/>
    </source>
</evidence>
<evidence type="ECO:0000269" key="4">
    <source>
    </source>
</evidence>
<evidence type="ECO:0000269" key="5">
    <source ref="2"/>
</evidence>
<evidence type="ECO:0000305" key="6"/>
<protein>
    <recommendedName>
        <fullName>Endo-1,4-beta-xylanase 2</fullName>
        <shortName>Xylanase 2</shortName>
        <ecNumber>3.2.1.8</ecNumber>
    </recommendedName>
    <alternativeName>
        <fullName>1,4-beta-D-xylan xylanohydrolase 2</fullName>
    </alternativeName>
</protein>
<dbReference type="EC" id="3.2.1.8"/>
<dbReference type="EMBL" id="L37530">
    <property type="protein sequence ID" value="AAC41684.1"/>
    <property type="molecule type" value="Genomic_DNA"/>
</dbReference>
<dbReference type="SMR" id="Q01176"/>
<dbReference type="CAZy" id="GH10">
    <property type="family name" value="Glycoside Hydrolase Family 10"/>
</dbReference>
<dbReference type="GlyCosmos" id="Q01176">
    <property type="glycosylation" value="2 sites, No reported glycans"/>
</dbReference>
<dbReference type="BRENDA" id="3.2.1.8">
    <property type="organism ID" value="3152"/>
</dbReference>
<dbReference type="UniPathway" id="UPA00114"/>
<dbReference type="PHI-base" id="PHI:568"/>
<dbReference type="Proteomes" id="UP000515153">
    <property type="component" value="Unplaced"/>
</dbReference>
<dbReference type="GO" id="GO:0005576">
    <property type="term" value="C:extracellular region"/>
    <property type="evidence" value="ECO:0007669"/>
    <property type="project" value="UniProtKB-SubCell"/>
</dbReference>
<dbReference type="GO" id="GO:0031176">
    <property type="term" value="F:endo-1,4-beta-xylanase activity"/>
    <property type="evidence" value="ECO:0007669"/>
    <property type="project" value="UniProtKB-EC"/>
</dbReference>
<dbReference type="GO" id="GO:0045493">
    <property type="term" value="P:xylan catabolic process"/>
    <property type="evidence" value="ECO:0007669"/>
    <property type="project" value="UniProtKB-UniPathway"/>
</dbReference>
<dbReference type="Gene3D" id="3.20.20.80">
    <property type="entry name" value="Glycosidases"/>
    <property type="match status" value="1"/>
</dbReference>
<dbReference type="InterPro" id="IPR044846">
    <property type="entry name" value="GH10"/>
</dbReference>
<dbReference type="InterPro" id="IPR001000">
    <property type="entry name" value="GH10_dom"/>
</dbReference>
<dbReference type="InterPro" id="IPR017853">
    <property type="entry name" value="Glycoside_hydrolase_SF"/>
</dbReference>
<dbReference type="PANTHER" id="PTHR31490:SF76">
    <property type="entry name" value="ENDO-1,4-BETA-XYLANASE C"/>
    <property type="match status" value="1"/>
</dbReference>
<dbReference type="PANTHER" id="PTHR31490">
    <property type="entry name" value="GLYCOSYL HYDROLASE"/>
    <property type="match status" value="1"/>
</dbReference>
<dbReference type="Pfam" id="PF00331">
    <property type="entry name" value="Glyco_hydro_10"/>
    <property type="match status" value="1"/>
</dbReference>
<dbReference type="PRINTS" id="PR00134">
    <property type="entry name" value="GLHYDRLASE10"/>
</dbReference>
<dbReference type="SMART" id="SM00633">
    <property type="entry name" value="Glyco_10"/>
    <property type="match status" value="1"/>
</dbReference>
<dbReference type="SUPFAM" id="SSF51445">
    <property type="entry name" value="(Trans)glycosidases"/>
    <property type="match status" value="1"/>
</dbReference>
<dbReference type="PROSITE" id="PS51760">
    <property type="entry name" value="GH10_2"/>
    <property type="match status" value="1"/>
</dbReference>
<keyword id="KW-0119">Carbohydrate metabolism</keyword>
<keyword id="KW-1015">Disulfide bond</keyword>
<keyword id="KW-0325">Glycoprotein</keyword>
<keyword id="KW-0326">Glycosidase</keyword>
<keyword id="KW-0378">Hydrolase</keyword>
<keyword id="KW-0624">Polysaccharide degradation</keyword>
<keyword id="KW-1185">Reference proteome</keyword>
<keyword id="KW-0964">Secreted</keyword>
<keyword id="KW-0732">Signal</keyword>
<keyword id="KW-0858">Xylan degradation</keyword>
<proteinExistence type="evidence at protein level"/>
<gene>
    <name type="primary">XYL2</name>
    <name type="synonym">XYN33</name>
</gene>
<comment type="function">
    <text evidence="5">Endo-1,4-beta-xylanase involved in the hydrolysis of xylan, a major structural heterogeneous polysaccharide found in plant biomass representing the second most abundant polysaccharide in the biosphere, after cellulose. Accounts for approximately 70 percent of the endoxylanase activity in the culture filtrate.</text>
</comment>
<comment type="catalytic activity">
    <reaction evidence="4">
        <text>Endohydrolysis of (1-&gt;4)-beta-D-xylosidic linkages in xylans.</text>
        <dbReference type="EC" id="3.2.1.8"/>
    </reaction>
</comment>
<comment type="pathway">
    <text>Glycan degradation; xylan degradation.</text>
</comment>
<comment type="subcellular location">
    <subcellularLocation>
        <location evidence="4">Secreted</location>
    </subcellularLocation>
</comment>
<comment type="induction">
    <text evidence="4">Expressed in presence of rice cell walls or on oat spelt xylan, but not when grown on sucrose.</text>
</comment>
<comment type="disruption phenotype">
    <text evidence="5">Retains 39 percent of the catalytic activity. Double xyl1/xyl2 deletion mutant retains 19 percent of the activity and exhibits a 50 percent reduction in accumulation of total mycelial mass.</text>
</comment>
<comment type="similarity">
    <text evidence="6">Belongs to the glycosyl hydrolase 10 (cellulase F) family.</text>
</comment>